<sequence>MYLKHIHLYGFRNYHEQTLDLQSQKTILLGNNAQGKSNLLEAVELLATLKSHRTNRDRDLILEGKKTGQILAMVERTYGESELGITFRSPGRRSLMLNHENLRRHLDFLGHINAVEFSCLDLDLVRGSPETRRSWLDTLLIQLEPVYASIIHQYYKILRQRNALLKVIRKTVEEQENSSNLSAELSQLKVWDQQLAEAGTRVTRRRYRVIERITPLAQKWHQEISSGTEILAINYLPNIKIENEDPQQVQQAFLDKIEQRRMAEQQLATTVVGPHRDDVEFNINHTPAKSYGSQGQQRTLVLAIKLAELQLIEEVIGEPPLLLLDDVLAELDPNRQNQLLEVIQGRFQTLITTTYLHSFDAQWLNSSQIMKVEGGKIAQL</sequence>
<accession>B1WT39</accession>
<comment type="function">
    <text evidence="1">The RecF protein is involved in DNA metabolism; it is required for DNA replication and normal SOS inducibility. RecF binds preferentially to single-stranded, linear DNA. It also seems to bind ATP.</text>
</comment>
<comment type="subcellular location">
    <subcellularLocation>
        <location evidence="1">Cytoplasm</location>
    </subcellularLocation>
</comment>
<comment type="similarity">
    <text evidence="1">Belongs to the RecF family.</text>
</comment>
<feature type="chain" id="PRO_1000133683" description="DNA replication and repair protein RecF">
    <location>
        <begin position="1"/>
        <end position="380"/>
    </location>
</feature>
<feature type="binding site" evidence="1">
    <location>
        <begin position="30"/>
        <end position="37"/>
    </location>
    <ligand>
        <name>ATP</name>
        <dbReference type="ChEBI" id="CHEBI:30616"/>
    </ligand>
</feature>
<gene>
    <name evidence="1" type="primary">recF</name>
    <name type="ordered locus">cce_2613</name>
</gene>
<keyword id="KW-0067">ATP-binding</keyword>
<keyword id="KW-0963">Cytoplasm</keyword>
<keyword id="KW-0227">DNA damage</keyword>
<keyword id="KW-0234">DNA repair</keyword>
<keyword id="KW-0235">DNA replication</keyword>
<keyword id="KW-0238">DNA-binding</keyword>
<keyword id="KW-0547">Nucleotide-binding</keyword>
<keyword id="KW-1185">Reference proteome</keyword>
<keyword id="KW-0742">SOS response</keyword>
<name>RECF_CROS5</name>
<evidence type="ECO:0000255" key="1">
    <source>
        <dbReference type="HAMAP-Rule" id="MF_00365"/>
    </source>
</evidence>
<proteinExistence type="inferred from homology"/>
<dbReference type="EMBL" id="CP000806">
    <property type="protein sequence ID" value="ACB51961.1"/>
    <property type="molecule type" value="Genomic_DNA"/>
</dbReference>
<dbReference type="RefSeq" id="WP_009544697.1">
    <property type="nucleotide sequence ID" value="NC_010546.1"/>
</dbReference>
<dbReference type="SMR" id="B1WT39"/>
<dbReference type="STRING" id="43989.cce_2613"/>
<dbReference type="KEGG" id="cyt:cce_2613"/>
<dbReference type="eggNOG" id="COG1195">
    <property type="taxonomic scope" value="Bacteria"/>
</dbReference>
<dbReference type="HOGENOM" id="CLU_040267_0_1_3"/>
<dbReference type="OrthoDB" id="9803889at2"/>
<dbReference type="Proteomes" id="UP000001203">
    <property type="component" value="Chromosome circular"/>
</dbReference>
<dbReference type="GO" id="GO:0005737">
    <property type="term" value="C:cytoplasm"/>
    <property type="evidence" value="ECO:0007669"/>
    <property type="project" value="UniProtKB-SubCell"/>
</dbReference>
<dbReference type="GO" id="GO:0005524">
    <property type="term" value="F:ATP binding"/>
    <property type="evidence" value="ECO:0007669"/>
    <property type="project" value="UniProtKB-UniRule"/>
</dbReference>
<dbReference type="GO" id="GO:0003697">
    <property type="term" value="F:single-stranded DNA binding"/>
    <property type="evidence" value="ECO:0007669"/>
    <property type="project" value="UniProtKB-UniRule"/>
</dbReference>
<dbReference type="GO" id="GO:0006260">
    <property type="term" value="P:DNA replication"/>
    <property type="evidence" value="ECO:0007669"/>
    <property type="project" value="UniProtKB-UniRule"/>
</dbReference>
<dbReference type="GO" id="GO:0000731">
    <property type="term" value="P:DNA synthesis involved in DNA repair"/>
    <property type="evidence" value="ECO:0007669"/>
    <property type="project" value="TreeGrafter"/>
</dbReference>
<dbReference type="GO" id="GO:0006302">
    <property type="term" value="P:double-strand break repair"/>
    <property type="evidence" value="ECO:0007669"/>
    <property type="project" value="TreeGrafter"/>
</dbReference>
<dbReference type="GO" id="GO:0009432">
    <property type="term" value="P:SOS response"/>
    <property type="evidence" value="ECO:0007669"/>
    <property type="project" value="UniProtKB-UniRule"/>
</dbReference>
<dbReference type="CDD" id="cd03242">
    <property type="entry name" value="ABC_RecF"/>
    <property type="match status" value="1"/>
</dbReference>
<dbReference type="Gene3D" id="3.40.50.300">
    <property type="entry name" value="P-loop containing nucleotide triphosphate hydrolases"/>
    <property type="match status" value="1"/>
</dbReference>
<dbReference type="Gene3D" id="1.20.1050.90">
    <property type="entry name" value="RecF/RecN/SMC, N-terminal domain"/>
    <property type="match status" value="1"/>
</dbReference>
<dbReference type="HAMAP" id="MF_00365">
    <property type="entry name" value="RecF"/>
    <property type="match status" value="1"/>
</dbReference>
<dbReference type="InterPro" id="IPR041685">
    <property type="entry name" value="AAA_GajA/Old/RecF-like"/>
</dbReference>
<dbReference type="InterPro" id="IPR001238">
    <property type="entry name" value="DNA-binding_RecF"/>
</dbReference>
<dbReference type="InterPro" id="IPR018078">
    <property type="entry name" value="DNA-binding_RecF_CS"/>
</dbReference>
<dbReference type="InterPro" id="IPR027417">
    <property type="entry name" value="P-loop_NTPase"/>
</dbReference>
<dbReference type="InterPro" id="IPR042174">
    <property type="entry name" value="RecF_2"/>
</dbReference>
<dbReference type="NCBIfam" id="TIGR00611">
    <property type="entry name" value="recf"/>
    <property type="match status" value="1"/>
</dbReference>
<dbReference type="PANTHER" id="PTHR32182">
    <property type="entry name" value="DNA REPLICATION AND REPAIR PROTEIN RECF"/>
    <property type="match status" value="1"/>
</dbReference>
<dbReference type="PANTHER" id="PTHR32182:SF0">
    <property type="entry name" value="DNA REPLICATION AND REPAIR PROTEIN RECF"/>
    <property type="match status" value="1"/>
</dbReference>
<dbReference type="Pfam" id="PF13175">
    <property type="entry name" value="AAA_15"/>
    <property type="match status" value="1"/>
</dbReference>
<dbReference type="SUPFAM" id="SSF52540">
    <property type="entry name" value="P-loop containing nucleoside triphosphate hydrolases"/>
    <property type="match status" value="1"/>
</dbReference>
<dbReference type="PROSITE" id="PS00617">
    <property type="entry name" value="RECF_1"/>
    <property type="match status" value="1"/>
</dbReference>
<dbReference type="PROSITE" id="PS00618">
    <property type="entry name" value="RECF_2"/>
    <property type="match status" value="1"/>
</dbReference>
<reference key="1">
    <citation type="journal article" date="2008" name="Proc. Natl. Acad. Sci. U.S.A.">
        <title>The genome of Cyanothece 51142, a unicellular diazotrophic cyanobacterium important in the marine nitrogen cycle.</title>
        <authorList>
            <person name="Welsh E.A."/>
            <person name="Liberton M."/>
            <person name="Stoeckel J."/>
            <person name="Loh T."/>
            <person name="Elvitigala T."/>
            <person name="Wang C."/>
            <person name="Wollam A."/>
            <person name="Fulton R.S."/>
            <person name="Clifton S.W."/>
            <person name="Jacobs J.M."/>
            <person name="Aurora R."/>
            <person name="Ghosh B.K."/>
            <person name="Sherman L.A."/>
            <person name="Smith R.D."/>
            <person name="Wilson R.K."/>
            <person name="Pakrasi H.B."/>
        </authorList>
    </citation>
    <scope>NUCLEOTIDE SEQUENCE [LARGE SCALE GENOMIC DNA]</scope>
    <source>
        <strain>ATCC 51142 / BH68</strain>
    </source>
</reference>
<organism>
    <name type="scientific">Crocosphaera subtropica (strain ATCC 51142 / BH68)</name>
    <name type="common">Cyanothece sp. (strain ATCC 51142)</name>
    <dbReference type="NCBI Taxonomy" id="43989"/>
    <lineage>
        <taxon>Bacteria</taxon>
        <taxon>Bacillati</taxon>
        <taxon>Cyanobacteriota</taxon>
        <taxon>Cyanophyceae</taxon>
        <taxon>Oscillatoriophycideae</taxon>
        <taxon>Chroococcales</taxon>
        <taxon>Aphanothecaceae</taxon>
        <taxon>Crocosphaera</taxon>
        <taxon>Crocosphaera subtropica</taxon>
    </lineage>
</organism>
<protein>
    <recommendedName>
        <fullName evidence="1">DNA replication and repair protein RecF</fullName>
    </recommendedName>
</protein>